<evidence type="ECO:0000255" key="1">
    <source>
        <dbReference type="HAMAP-Rule" id="MF_00214"/>
    </source>
</evidence>
<gene>
    <name evidence="1" type="primary">aroD</name>
    <name type="ordered locus">SDY_1474</name>
</gene>
<dbReference type="EC" id="4.2.1.10" evidence="1"/>
<dbReference type="EMBL" id="CP000034">
    <property type="protein sequence ID" value="ABB61613.1"/>
    <property type="molecule type" value="Genomic_DNA"/>
</dbReference>
<dbReference type="RefSeq" id="WP_000860167.1">
    <property type="nucleotide sequence ID" value="NC_007606.1"/>
</dbReference>
<dbReference type="RefSeq" id="YP_403104.1">
    <property type="nucleotide sequence ID" value="NC_007606.1"/>
</dbReference>
<dbReference type="SMR" id="Q32GE2"/>
<dbReference type="STRING" id="300267.SDY_1474"/>
<dbReference type="EnsemblBacteria" id="ABB61613">
    <property type="protein sequence ID" value="ABB61613"/>
    <property type="gene ID" value="SDY_1474"/>
</dbReference>
<dbReference type="KEGG" id="sdy:SDY_1474"/>
<dbReference type="PATRIC" id="fig|300267.13.peg.1758"/>
<dbReference type="HOGENOM" id="CLU_064444_0_0_6"/>
<dbReference type="UniPathway" id="UPA00053">
    <property type="reaction ID" value="UER00086"/>
</dbReference>
<dbReference type="Proteomes" id="UP000002716">
    <property type="component" value="Chromosome"/>
</dbReference>
<dbReference type="GO" id="GO:0003855">
    <property type="term" value="F:3-dehydroquinate dehydratase activity"/>
    <property type="evidence" value="ECO:0007669"/>
    <property type="project" value="UniProtKB-UniRule"/>
</dbReference>
<dbReference type="GO" id="GO:0046279">
    <property type="term" value="P:3,4-dihydroxybenzoate biosynthetic process"/>
    <property type="evidence" value="ECO:0007669"/>
    <property type="project" value="TreeGrafter"/>
</dbReference>
<dbReference type="GO" id="GO:0008652">
    <property type="term" value="P:amino acid biosynthetic process"/>
    <property type="evidence" value="ECO:0007669"/>
    <property type="project" value="UniProtKB-KW"/>
</dbReference>
<dbReference type="GO" id="GO:0009073">
    <property type="term" value="P:aromatic amino acid family biosynthetic process"/>
    <property type="evidence" value="ECO:0007669"/>
    <property type="project" value="UniProtKB-KW"/>
</dbReference>
<dbReference type="GO" id="GO:0009423">
    <property type="term" value="P:chorismate biosynthetic process"/>
    <property type="evidence" value="ECO:0007669"/>
    <property type="project" value="UniProtKB-UniRule"/>
</dbReference>
<dbReference type="CDD" id="cd00502">
    <property type="entry name" value="DHQase_I"/>
    <property type="match status" value="1"/>
</dbReference>
<dbReference type="FunFam" id="3.20.20.70:FF:000047">
    <property type="entry name" value="3-dehydroquinate dehydratase"/>
    <property type="match status" value="1"/>
</dbReference>
<dbReference type="Gene3D" id="3.20.20.70">
    <property type="entry name" value="Aldolase class I"/>
    <property type="match status" value="1"/>
</dbReference>
<dbReference type="HAMAP" id="MF_00214">
    <property type="entry name" value="AroD"/>
    <property type="match status" value="1"/>
</dbReference>
<dbReference type="InterPro" id="IPR018508">
    <property type="entry name" value="3-dehydroquinate_DH_AS"/>
</dbReference>
<dbReference type="InterPro" id="IPR013785">
    <property type="entry name" value="Aldolase_TIM"/>
</dbReference>
<dbReference type="InterPro" id="IPR001381">
    <property type="entry name" value="DHquinase_I"/>
</dbReference>
<dbReference type="InterPro" id="IPR050146">
    <property type="entry name" value="Type-I_3-dehydroquinase"/>
</dbReference>
<dbReference type="NCBIfam" id="TIGR01093">
    <property type="entry name" value="aroD"/>
    <property type="match status" value="1"/>
</dbReference>
<dbReference type="PANTHER" id="PTHR43699">
    <property type="entry name" value="3-DEHYDROQUINATE DEHYDRATASE"/>
    <property type="match status" value="1"/>
</dbReference>
<dbReference type="PANTHER" id="PTHR43699:SF1">
    <property type="entry name" value="3-DEHYDROQUINATE DEHYDRATASE"/>
    <property type="match status" value="1"/>
</dbReference>
<dbReference type="Pfam" id="PF01487">
    <property type="entry name" value="DHquinase_I"/>
    <property type="match status" value="1"/>
</dbReference>
<dbReference type="SUPFAM" id="SSF51569">
    <property type="entry name" value="Aldolase"/>
    <property type="match status" value="1"/>
</dbReference>
<dbReference type="PROSITE" id="PS01028">
    <property type="entry name" value="DEHYDROQUINASE_I"/>
    <property type="match status" value="1"/>
</dbReference>
<proteinExistence type="inferred from homology"/>
<organism>
    <name type="scientific">Shigella dysenteriae serotype 1 (strain Sd197)</name>
    <dbReference type="NCBI Taxonomy" id="300267"/>
    <lineage>
        <taxon>Bacteria</taxon>
        <taxon>Pseudomonadati</taxon>
        <taxon>Pseudomonadota</taxon>
        <taxon>Gammaproteobacteria</taxon>
        <taxon>Enterobacterales</taxon>
        <taxon>Enterobacteriaceae</taxon>
        <taxon>Shigella</taxon>
    </lineage>
</organism>
<name>AROD_SHIDS</name>
<comment type="function">
    <text evidence="1">Involved in the third step of the chorismate pathway, which leads to the biosynthesis of aromatic amino acids. Catalyzes the cis-dehydration of 3-dehydroquinate (DHQ) and introduces the first double bond of the aromatic ring to yield 3-dehydroshikimate.</text>
</comment>
<comment type="catalytic activity">
    <reaction evidence="1">
        <text>3-dehydroquinate = 3-dehydroshikimate + H2O</text>
        <dbReference type="Rhea" id="RHEA:21096"/>
        <dbReference type="ChEBI" id="CHEBI:15377"/>
        <dbReference type="ChEBI" id="CHEBI:16630"/>
        <dbReference type="ChEBI" id="CHEBI:32364"/>
        <dbReference type="EC" id="4.2.1.10"/>
    </reaction>
</comment>
<comment type="pathway">
    <text evidence="1">Metabolic intermediate biosynthesis; chorismate biosynthesis; chorismate from D-erythrose 4-phosphate and phosphoenolpyruvate: step 3/7.</text>
</comment>
<comment type="subunit">
    <text evidence="1">Homodimer.</text>
</comment>
<comment type="similarity">
    <text evidence="1">Belongs to the type-I 3-dehydroquinase family.</text>
</comment>
<sequence length="252" mass="27520">MKTVTVKDLVIGAGAPKIIVSLMAKDIARVKSEALAYRETDFDILEWRVDHFADLSNVESVMAAAKILRETMPEKPLLFTFRSAKEGGEQAISTEAYIALNRAAIDSGLVDMIDLELFTGDDQVKETVAYAHAHDVKVVMSNHDFHKTPEAEEIIARLRKMQSFDADIPKIALMPQSTSDVLTLLAATLEMQEQYADRPIITMSMAKTGVISRLAGEVFGSAATFGAVKKASAPGQISVNDLRTVLTILHQA</sequence>
<keyword id="KW-0028">Amino-acid biosynthesis</keyword>
<keyword id="KW-0057">Aromatic amino acid biosynthesis</keyword>
<keyword id="KW-0456">Lyase</keyword>
<keyword id="KW-1185">Reference proteome</keyword>
<keyword id="KW-0704">Schiff base</keyword>
<feature type="chain" id="PRO_1000043181" description="3-dehydroquinate dehydratase">
    <location>
        <begin position="1"/>
        <end position="252"/>
    </location>
</feature>
<feature type="active site" description="Proton donor/acceptor" evidence="1">
    <location>
        <position position="143"/>
    </location>
</feature>
<feature type="active site" description="Schiff-base intermediate with substrate" evidence="1">
    <location>
        <position position="170"/>
    </location>
</feature>
<feature type="binding site" evidence="1">
    <location>
        <position position="21"/>
    </location>
    <ligand>
        <name>3-dehydroquinate</name>
        <dbReference type="ChEBI" id="CHEBI:32364"/>
    </ligand>
</feature>
<feature type="binding site" evidence="1">
    <location>
        <begin position="46"/>
        <end position="48"/>
    </location>
    <ligand>
        <name>3-dehydroquinate</name>
        <dbReference type="ChEBI" id="CHEBI:32364"/>
    </ligand>
</feature>
<feature type="binding site" evidence="1">
    <location>
        <position position="82"/>
    </location>
    <ligand>
        <name>3-dehydroquinate</name>
        <dbReference type="ChEBI" id="CHEBI:32364"/>
    </ligand>
</feature>
<feature type="binding site" evidence="1">
    <location>
        <position position="213"/>
    </location>
    <ligand>
        <name>3-dehydroquinate</name>
        <dbReference type="ChEBI" id="CHEBI:32364"/>
    </ligand>
</feature>
<feature type="binding site" evidence="1">
    <location>
        <position position="232"/>
    </location>
    <ligand>
        <name>3-dehydroquinate</name>
        <dbReference type="ChEBI" id="CHEBI:32364"/>
    </ligand>
</feature>
<feature type="binding site" evidence="1">
    <location>
        <position position="236"/>
    </location>
    <ligand>
        <name>3-dehydroquinate</name>
        <dbReference type="ChEBI" id="CHEBI:32364"/>
    </ligand>
</feature>
<protein>
    <recommendedName>
        <fullName evidence="1">3-dehydroquinate dehydratase</fullName>
        <shortName evidence="1">3-dehydroquinase</shortName>
        <ecNumber evidence="1">4.2.1.10</ecNumber>
    </recommendedName>
    <alternativeName>
        <fullName evidence="1">Type I DHQase</fullName>
    </alternativeName>
    <alternativeName>
        <fullName evidence="1">Type I dehydroquinase</fullName>
        <shortName evidence="1">DHQ1</shortName>
    </alternativeName>
</protein>
<accession>Q32GE2</accession>
<reference key="1">
    <citation type="journal article" date="2005" name="Nucleic Acids Res.">
        <title>Genome dynamics and diversity of Shigella species, the etiologic agents of bacillary dysentery.</title>
        <authorList>
            <person name="Yang F."/>
            <person name="Yang J."/>
            <person name="Zhang X."/>
            <person name="Chen L."/>
            <person name="Jiang Y."/>
            <person name="Yan Y."/>
            <person name="Tang X."/>
            <person name="Wang J."/>
            <person name="Xiong Z."/>
            <person name="Dong J."/>
            <person name="Xue Y."/>
            <person name="Zhu Y."/>
            <person name="Xu X."/>
            <person name="Sun L."/>
            <person name="Chen S."/>
            <person name="Nie H."/>
            <person name="Peng J."/>
            <person name="Xu J."/>
            <person name="Wang Y."/>
            <person name="Yuan Z."/>
            <person name="Wen Y."/>
            <person name="Yao Z."/>
            <person name="Shen Y."/>
            <person name="Qiang B."/>
            <person name="Hou Y."/>
            <person name="Yu J."/>
            <person name="Jin Q."/>
        </authorList>
    </citation>
    <scope>NUCLEOTIDE SEQUENCE [LARGE SCALE GENOMIC DNA]</scope>
    <source>
        <strain>Sd197</strain>
    </source>
</reference>